<keyword id="KW-0067">ATP-binding</keyword>
<keyword id="KW-0997">Cell inner membrane</keyword>
<keyword id="KW-1003">Cell membrane</keyword>
<keyword id="KW-0445">Lipid transport</keyword>
<keyword id="KW-0472">Membrane</keyword>
<keyword id="KW-0547">Nucleotide-binding</keyword>
<keyword id="KW-1185">Reference proteome</keyword>
<keyword id="KW-1278">Translocase</keyword>
<keyword id="KW-0812">Transmembrane</keyword>
<keyword id="KW-1133">Transmembrane helix</keyword>
<keyword id="KW-0813">Transport</keyword>
<feature type="chain" id="PRO_0000092591" description="ATP-dependent lipid A-core flippase">
    <location>
        <begin position="1"/>
        <end position="582"/>
    </location>
</feature>
<feature type="transmembrane region" description="Helical" evidence="1">
    <location>
        <begin position="15"/>
        <end position="35"/>
    </location>
</feature>
<feature type="transmembrane region" description="Helical" evidence="1">
    <location>
        <begin position="68"/>
        <end position="88"/>
    </location>
</feature>
<feature type="transmembrane region" description="Helical" evidence="1">
    <location>
        <begin position="140"/>
        <end position="160"/>
    </location>
</feature>
<feature type="transmembrane region" description="Helical" evidence="1">
    <location>
        <begin position="161"/>
        <end position="181"/>
    </location>
</feature>
<feature type="transmembrane region" description="Helical" evidence="1">
    <location>
        <begin position="254"/>
        <end position="274"/>
    </location>
</feature>
<feature type="domain" description="ABC transmembrane type-1" evidence="1">
    <location>
        <begin position="27"/>
        <end position="310"/>
    </location>
</feature>
<feature type="domain" description="ABC transporter" evidence="1">
    <location>
        <begin position="342"/>
        <end position="578"/>
    </location>
</feature>
<feature type="binding site" evidence="1">
    <location>
        <begin position="376"/>
        <end position="383"/>
    </location>
    <ligand>
        <name>ATP</name>
        <dbReference type="ChEBI" id="CHEBI:30616"/>
    </ligand>
</feature>
<evidence type="ECO:0000255" key="1">
    <source>
        <dbReference type="HAMAP-Rule" id="MF_01703"/>
    </source>
</evidence>
<dbReference type="EC" id="7.5.2.6" evidence="1"/>
<dbReference type="EMBL" id="AE004439">
    <property type="protein sequence ID" value="AAK02945.1"/>
    <property type="molecule type" value="Genomic_DNA"/>
</dbReference>
<dbReference type="RefSeq" id="WP_005716843.1">
    <property type="nucleotide sequence ID" value="NC_002663.1"/>
</dbReference>
<dbReference type="SMR" id="Q9CMG7"/>
<dbReference type="STRING" id="272843.PM0861"/>
<dbReference type="EnsemblBacteria" id="AAK02945">
    <property type="protein sequence ID" value="AAK02945"/>
    <property type="gene ID" value="PM0861"/>
</dbReference>
<dbReference type="GeneID" id="77207710"/>
<dbReference type="KEGG" id="pmu:PM0861"/>
<dbReference type="PATRIC" id="fig|272843.6.peg.871"/>
<dbReference type="HOGENOM" id="CLU_000604_84_3_6"/>
<dbReference type="OrthoDB" id="9806127at2"/>
<dbReference type="Proteomes" id="UP000000809">
    <property type="component" value="Chromosome"/>
</dbReference>
<dbReference type="GO" id="GO:0005886">
    <property type="term" value="C:plasma membrane"/>
    <property type="evidence" value="ECO:0007669"/>
    <property type="project" value="UniProtKB-SubCell"/>
</dbReference>
<dbReference type="GO" id="GO:0015421">
    <property type="term" value="F:ABC-type oligopeptide transporter activity"/>
    <property type="evidence" value="ECO:0007669"/>
    <property type="project" value="TreeGrafter"/>
</dbReference>
<dbReference type="GO" id="GO:0005524">
    <property type="term" value="F:ATP binding"/>
    <property type="evidence" value="ECO:0007669"/>
    <property type="project" value="UniProtKB-KW"/>
</dbReference>
<dbReference type="GO" id="GO:0016887">
    <property type="term" value="F:ATP hydrolysis activity"/>
    <property type="evidence" value="ECO:0007669"/>
    <property type="project" value="InterPro"/>
</dbReference>
<dbReference type="GO" id="GO:0034040">
    <property type="term" value="F:ATPase-coupled lipid transmembrane transporter activity"/>
    <property type="evidence" value="ECO:0007669"/>
    <property type="project" value="InterPro"/>
</dbReference>
<dbReference type="CDD" id="cd18552">
    <property type="entry name" value="ABC_6TM_MsbA_like"/>
    <property type="match status" value="1"/>
</dbReference>
<dbReference type="CDD" id="cd03251">
    <property type="entry name" value="ABCC_MsbA"/>
    <property type="match status" value="1"/>
</dbReference>
<dbReference type="FunFam" id="3.40.50.300:FF:000140">
    <property type="entry name" value="Lipid A export ATP-binding/permease protein MsbA"/>
    <property type="match status" value="1"/>
</dbReference>
<dbReference type="Gene3D" id="1.20.1560.10">
    <property type="entry name" value="ABC transporter type 1, transmembrane domain"/>
    <property type="match status" value="1"/>
</dbReference>
<dbReference type="Gene3D" id="3.40.50.300">
    <property type="entry name" value="P-loop containing nucleotide triphosphate hydrolases"/>
    <property type="match status" value="1"/>
</dbReference>
<dbReference type="InterPro" id="IPR003593">
    <property type="entry name" value="AAA+_ATPase"/>
</dbReference>
<dbReference type="InterPro" id="IPR011527">
    <property type="entry name" value="ABC1_TM_dom"/>
</dbReference>
<dbReference type="InterPro" id="IPR036640">
    <property type="entry name" value="ABC1_TM_sf"/>
</dbReference>
<dbReference type="InterPro" id="IPR003439">
    <property type="entry name" value="ABC_transporter-like_ATP-bd"/>
</dbReference>
<dbReference type="InterPro" id="IPR017871">
    <property type="entry name" value="ABC_transporter-like_CS"/>
</dbReference>
<dbReference type="InterPro" id="IPR011917">
    <property type="entry name" value="ABC_transpr_lipidA"/>
</dbReference>
<dbReference type="InterPro" id="IPR027417">
    <property type="entry name" value="P-loop_NTPase"/>
</dbReference>
<dbReference type="InterPro" id="IPR039421">
    <property type="entry name" value="Type_1_exporter"/>
</dbReference>
<dbReference type="NCBIfam" id="TIGR02203">
    <property type="entry name" value="MsbA_lipidA"/>
    <property type="match status" value="1"/>
</dbReference>
<dbReference type="NCBIfam" id="NF008381">
    <property type="entry name" value="PRK11176.1"/>
    <property type="match status" value="1"/>
</dbReference>
<dbReference type="PANTHER" id="PTHR43394:SF1">
    <property type="entry name" value="ATP-BINDING CASSETTE SUB-FAMILY B MEMBER 10, MITOCHONDRIAL"/>
    <property type="match status" value="1"/>
</dbReference>
<dbReference type="PANTHER" id="PTHR43394">
    <property type="entry name" value="ATP-DEPENDENT PERMEASE MDL1, MITOCHONDRIAL"/>
    <property type="match status" value="1"/>
</dbReference>
<dbReference type="Pfam" id="PF00664">
    <property type="entry name" value="ABC_membrane"/>
    <property type="match status" value="1"/>
</dbReference>
<dbReference type="Pfam" id="PF00005">
    <property type="entry name" value="ABC_tran"/>
    <property type="match status" value="1"/>
</dbReference>
<dbReference type="SMART" id="SM00382">
    <property type="entry name" value="AAA"/>
    <property type="match status" value="1"/>
</dbReference>
<dbReference type="SUPFAM" id="SSF90123">
    <property type="entry name" value="ABC transporter transmembrane region"/>
    <property type="match status" value="1"/>
</dbReference>
<dbReference type="SUPFAM" id="SSF52540">
    <property type="entry name" value="P-loop containing nucleoside triphosphate hydrolases"/>
    <property type="match status" value="1"/>
</dbReference>
<dbReference type="PROSITE" id="PS50929">
    <property type="entry name" value="ABC_TM1F"/>
    <property type="match status" value="1"/>
</dbReference>
<dbReference type="PROSITE" id="PS00211">
    <property type="entry name" value="ABC_TRANSPORTER_1"/>
    <property type="match status" value="1"/>
</dbReference>
<dbReference type="PROSITE" id="PS50893">
    <property type="entry name" value="ABC_TRANSPORTER_2"/>
    <property type="match status" value="1"/>
</dbReference>
<dbReference type="PROSITE" id="PS51239">
    <property type="entry name" value="MSBA"/>
    <property type="match status" value="1"/>
</dbReference>
<sequence>MQDKDLSTVQTFKRLWPIISPFKLGLVVSGIALVINALADAGLISLLKPLLDEGFGKADVSFLRTMSYVVVLVIFLRGISNFISSYCLSWVSGKVVMIMRRRIFKHLMFMPVPFFDQNSSGRLLSRITYDSELVANSSSGALITIVREGAYIISLLAVMLYTSWQLSIVLFLIGPIIAVLIRFVSKRFRELSKNMQNSMGELTSTAEQMLKGHKVVLSFGGQIVEEERFNHVSNDMRRKGMKMAVADAISNPVVQIIASFALAAVLYLATVPTIMDQNLTAGSFTVVFSSMLAMMRPLKSLTNVNAQFQKGMAACQTLFALLDLETEKDLGTHKGENVQGYLSFKNVTFTYQSRDEPALRNLSFDVEKGKTVALVGRSGSGKSTIANLVTRFYDVDQGEITLDGINIQDYRLSSLRKNCAVVSQQVHLFNDTIANNIAYAAKDKYSREEIIKAAKDAYAMEFIEKLEHGLDTVIGENGVNLSGGQRQRLAIARALLRNSPVLILDEATSALDTESERSIQLALEKLQKERTVIVIAHRLSTIENADEILVIEHGEIKERGSHSELLALNGAYKQLHHIQVNH</sequence>
<reference key="1">
    <citation type="journal article" date="2001" name="Proc. Natl. Acad. Sci. U.S.A.">
        <title>Complete genomic sequence of Pasteurella multocida Pm70.</title>
        <authorList>
            <person name="May B.J."/>
            <person name="Zhang Q."/>
            <person name="Li L.L."/>
            <person name="Paustian M.L."/>
            <person name="Whittam T.S."/>
            <person name="Kapur V."/>
        </authorList>
    </citation>
    <scope>NUCLEOTIDE SEQUENCE [LARGE SCALE GENOMIC DNA]</scope>
    <source>
        <strain>Pm70</strain>
    </source>
</reference>
<gene>
    <name evidence="1" type="primary">msbA</name>
    <name type="ordered locus">PM0861</name>
</gene>
<organism>
    <name type="scientific">Pasteurella multocida (strain Pm70)</name>
    <dbReference type="NCBI Taxonomy" id="272843"/>
    <lineage>
        <taxon>Bacteria</taxon>
        <taxon>Pseudomonadati</taxon>
        <taxon>Pseudomonadota</taxon>
        <taxon>Gammaproteobacteria</taxon>
        <taxon>Pasteurellales</taxon>
        <taxon>Pasteurellaceae</taxon>
        <taxon>Pasteurella</taxon>
    </lineage>
</organism>
<accession>Q9CMG7</accession>
<protein>
    <recommendedName>
        <fullName evidence="1">ATP-dependent lipid A-core flippase</fullName>
        <ecNumber evidence="1">7.5.2.6</ecNumber>
    </recommendedName>
    <alternativeName>
        <fullName evidence="1">Lipid A export ATP-binding/permease protein MsbA</fullName>
    </alternativeName>
</protein>
<name>MSBA_PASMU</name>
<comment type="function">
    <text evidence="1">Involved in lipopolysaccharide (LPS) biosynthesis. Translocates lipid A-core from the inner to the outer leaflet of the inner membrane. Transmembrane domains (TMD) form a pore in the inner membrane and the ATP-binding domain (NBD) is responsible for energy generation.</text>
</comment>
<comment type="catalytic activity">
    <reaction evidence="1">
        <text>ATP + H2O + lipid A-core oligosaccharideSide 1 = ADP + phosphate + lipid A-core oligosaccharideSide 2.</text>
        <dbReference type="EC" id="7.5.2.6"/>
    </reaction>
</comment>
<comment type="subunit">
    <text evidence="1">Homodimer.</text>
</comment>
<comment type="subcellular location">
    <subcellularLocation>
        <location evidence="1">Cell inner membrane</location>
        <topology evidence="1">Multi-pass membrane protein</topology>
    </subcellularLocation>
</comment>
<comment type="domain">
    <text evidence="1">In MsbA the ATP-binding domain (NBD) and the transmembrane domain (TMD) are fused.</text>
</comment>
<comment type="similarity">
    <text evidence="1">Belongs to the ABC transporter superfamily. Lipid exporter (TC 3.A.1.106) family.</text>
</comment>
<proteinExistence type="inferred from homology"/>